<proteinExistence type="evidence at transcript level"/>
<comment type="function">
    <text>Beta-adrenergic receptors mediate the catecholamine-induced activation of adenylate cyclase through the action of G proteins. Beta-3 is involved in the regulation of lipolysis and thermogenesis.</text>
</comment>
<comment type="subunit">
    <text evidence="2">Interacts with ARRDC3.</text>
</comment>
<comment type="subcellular location">
    <subcellularLocation>
        <location>Cell membrane</location>
        <topology>Multi-pass membrane protein</topology>
    </subcellularLocation>
</comment>
<comment type="alternative products">
    <event type="alternative splicing"/>
    <isoform>
        <id>P25962-1</id>
        <name>A</name>
        <sequence type="displayed"/>
    </isoform>
    <isoform>
        <id>P25962-2</id>
        <name>B</name>
        <sequence type="described" ref="VSP_001864"/>
    </isoform>
</comment>
<comment type="tissue specificity">
    <text>White and brown adipose tissues, and digestive tract. Isoform B highest in brain.</text>
</comment>
<comment type="similarity">
    <text evidence="4">Belongs to the G-protein coupled receptor 1 family. Adrenergic receptor subfamily. ADRB3 sub-subfamily.</text>
</comment>
<organism>
    <name type="scientific">Mus musculus</name>
    <name type="common">Mouse</name>
    <dbReference type="NCBI Taxonomy" id="10090"/>
    <lineage>
        <taxon>Eukaryota</taxon>
        <taxon>Metazoa</taxon>
        <taxon>Chordata</taxon>
        <taxon>Craniata</taxon>
        <taxon>Vertebrata</taxon>
        <taxon>Euteleostomi</taxon>
        <taxon>Mammalia</taxon>
        <taxon>Eutheria</taxon>
        <taxon>Euarchontoglires</taxon>
        <taxon>Glires</taxon>
        <taxon>Rodentia</taxon>
        <taxon>Myomorpha</taxon>
        <taxon>Muroidea</taxon>
        <taxon>Muridae</taxon>
        <taxon>Murinae</taxon>
        <taxon>Mus</taxon>
        <taxon>Mus</taxon>
    </lineage>
</organism>
<sequence>MAPWPHRNGSLALWSDAPTLDPSAANTSGLPGVPWAAALAGALLALATVGGNLLVIIAIARTPRLQTITNVFVTSLAAADLVVGLLVMPPGATLALTGHWPLGETGCELWTSVDVLCVTASIETLCALAVDRYLAVTNPLRYGTLVTKRRARAAVVLVWIVSAAVSFAPIMSQWWRVGADAEAQECHSNPRCCSFASNMPYALLSSSVSFYLPLLVMLFVYARVFVVAKRQRHLLRRELGRFSPEESPPSPSRSPSPATGGTPAAPDGVPPCGRRPARLLPLREHRALRTLGLIMGIFSLCWLPFFLANVLRALAGPSLVPSGVFIALNWLGYANSAFNPVIYCRSPDFRDAFRRLLCSYGGRGPEEPRAVTFPASPVEARQSPPLNRFDGYEGARPFPT</sequence>
<name>ADRB3_MOUSE</name>
<reference key="1">
    <citation type="journal article" date="1991" name="EMBO J.">
        <title>Molecular characterization of the mouse beta 3-adrenergic receptor: relationship with the atypical receptor of adipocytes.</title>
        <authorList>
            <person name="Nahmias C."/>
            <person name="Blin N."/>
            <person name="Elalouf J.-M."/>
            <person name="Mattei M.-G."/>
            <person name="Strosberg A.D."/>
            <person name="Emorine L.J."/>
        </authorList>
    </citation>
    <scope>NUCLEOTIDE SEQUENCE [GENOMIC DNA]</scope>
    <source>
        <strain>SWR/J</strain>
    </source>
</reference>
<reference key="2">
    <citation type="journal article" date="1993" name="Eur. J. Biochem.">
        <title>The promoter and intron/exon structure of the human and mouse beta 3-adrenergic-receptor genes.</title>
        <authorList>
            <person name="van Spronsen A."/>
            <person name="Nahmias C."/>
            <person name="Krief S."/>
            <person name="Briend-Sutren M.-M."/>
            <person name="Strosberg A.D."/>
            <person name="Emorine L.J."/>
        </authorList>
    </citation>
    <scope>NUCLEOTIDE SEQUENCE [GENOMIC DNA]</scope>
    <scope>SEQUENCE REVISION</scope>
</reference>
<reference key="3">
    <citation type="journal article" date="1999" name="Br. J. Pharmacol.">
        <title>Alternative splicing generates two isoforms of the beta3-adrenoceptor which are differentially expressed in mouse tissues.</title>
        <authorList>
            <person name="Evans B.A."/>
            <person name="Papaioannou M."/>
            <person name="Hamilton S."/>
            <person name="Summers R.J."/>
        </authorList>
    </citation>
    <scope>NUCLEOTIDE SEQUENCE [MRNA] (ISOFORM B)</scope>
    <source>
        <strain>C57BL/6J</strain>
        <tissue>Brown adipose tissue</tissue>
    </source>
</reference>
<reference key="4">
    <citation type="journal article" date="2004" name="Genome Res.">
        <title>The status, quality, and expansion of the NIH full-length cDNA project: the Mammalian Gene Collection (MGC).</title>
        <authorList>
            <consortium name="The MGC Project Team"/>
        </authorList>
    </citation>
    <scope>NUCLEOTIDE SEQUENCE [LARGE SCALE MRNA] (ISOFORM B)</scope>
    <source>
        <tissue>Brain</tissue>
    </source>
</reference>
<reference key="5">
    <citation type="journal article" date="1992" name="Mol. Pharmacol.">
        <title>Rodent and human beta 3-adrenergic receptor genes contain an intron within the protein-coding block.</title>
        <authorList>
            <person name="Granneman J.G."/>
            <person name="Lahners K.N."/>
            <person name="Rao D.D."/>
        </authorList>
    </citation>
    <scope>NUCLEOTIDE SEQUENCE OF 378-400</scope>
    <source>
        <tissue>Adipose tissue</tissue>
    </source>
</reference>
<feature type="chain" id="PRO_0000069146" description="Beta-3 adrenergic receptor">
    <location>
        <begin position="1"/>
        <end position="400"/>
    </location>
</feature>
<feature type="topological domain" description="Extracellular" evidence="1">
    <location>
        <begin position="1"/>
        <end position="36"/>
    </location>
</feature>
<feature type="transmembrane region" description="Helical; Name=1" evidence="1">
    <location>
        <begin position="37"/>
        <end position="60"/>
    </location>
</feature>
<feature type="topological domain" description="Cytoplasmic" evidence="1">
    <location>
        <begin position="61"/>
        <end position="69"/>
    </location>
</feature>
<feature type="transmembrane region" description="Helical; Name=2" evidence="1">
    <location>
        <begin position="70"/>
        <end position="88"/>
    </location>
</feature>
<feature type="topological domain" description="Extracellular" evidence="1">
    <location>
        <begin position="89"/>
        <end position="108"/>
    </location>
</feature>
<feature type="transmembrane region" description="Helical; Name=3" evidence="1">
    <location>
        <begin position="109"/>
        <end position="130"/>
    </location>
</feature>
<feature type="topological domain" description="Cytoplasmic" evidence="1">
    <location>
        <begin position="131"/>
        <end position="152"/>
    </location>
</feature>
<feature type="transmembrane region" description="Helical; Name=4" evidence="1">
    <location>
        <begin position="153"/>
        <end position="175"/>
    </location>
</feature>
<feature type="topological domain" description="Extracellular" evidence="1">
    <location>
        <begin position="176"/>
        <end position="200"/>
    </location>
</feature>
<feature type="transmembrane region" description="Helical; Name=5" evidence="1">
    <location>
        <begin position="201"/>
        <end position="222"/>
    </location>
</feature>
<feature type="topological domain" description="Cytoplasmic" evidence="1">
    <location>
        <begin position="223"/>
        <end position="289"/>
    </location>
</feature>
<feature type="transmembrane region" description="Helical; Name=6" evidence="1">
    <location>
        <begin position="290"/>
        <end position="311"/>
    </location>
</feature>
<feature type="topological domain" description="Extracellular" evidence="1">
    <location>
        <begin position="312"/>
        <end position="323"/>
    </location>
</feature>
<feature type="transmembrane region" description="Helical; Name=7" evidence="1">
    <location>
        <begin position="324"/>
        <end position="344"/>
    </location>
</feature>
<feature type="topological domain" description="Cytoplasmic" evidence="1">
    <location>
        <begin position="345"/>
        <end position="400"/>
    </location>
</feature>
<feature type="region of interest" description="Disordered" evidence="5">
    <location>
        <begin position="241"/>
        <end position="271"/>
    </location>
</feature>
<feature type="region of interest" description="Disordered" evidence="5">
    <location>
        <begin position="370"/>
        <end position="400"/>
    </location>
</feature>
<feature type="compositionally biased region" description="Low complexity" evidence="5">
    <location>
        <begin position="255"/>
        <end position="271"/>
    </location>
</feature>
<feature type="lipid moiety-binding region" description="S-palmitoyl cysteine" evidence="1">
    <location>
        <position position="358"/>
    </location>
</feature>
<feature type="glycosylation site" description="N-linked (GlcNAc...) asparagine" evidence="3">
    <location>
        <position position="8"/>
    </location>
</feature>
<feature type="glycosylation site" description="N-linked (GlcNAc...) asparagine" evidence="3">
    <location>
        <position position="26"/>
    </location>
</feature>
<feature type="disulfide bond" evidence="4">
    <location>
        <begin position="107"/>
        <end position="193"/>
    </location>
</feature>
<feature type="disulfide bond" evidence="4">
    <location>
        <begin position="186"/>
        <end position="192"/>
    </location>
</feature>
<feature type="splice variant" id="VSP_001864" description="In isoform B." evidence="6 7">
    <original>RFDGYEGARPFPT</original>
    <variation>SSLLREPRHLYTCLGYP</variation>
    <location>
        <begin position="388"/>
        <end position="400"/>
    </location>
</feature>
<gene>
    <name type="primary">Adrb3</name>
    <name type="synonym">Adrb3r</name>
    <name type="synonym">B3bar</name>
</gene>
<accession>P25962</accession>
<accession>A2RS74</accession>
<accession>Q9QZ98</accession>
<evidence type="ECO:0000250" key="1"/>
<evidence type="ECO:0000250" key="2">
    <source>
        <dbReference type="UniProtKB" id="P13945"/>
    </source>
</evidence>
<evidence type="ECO:0000255" key="3"/>
<evidence type="ECO:0000255" key="4">
    <source>
        <dbReference type="PROSITE-ProRule" id="PRU00521"/>
    </source>
</evidence>
<evidence type="ECO:0000256" key="5">
    <source>
        <dbReference type="SAM" id="MobiDB-lite"/>
    </source>
</evidence>
<evidence type="ECO:0000303" key="6">
    <source>
    </source>
</evidence>
<evidence type="ECO:0000303" key="7">
    <source>
    </source>
</evidence>
<keyword id="KW-0025">Alternative splicing</keyword>
<keyword id="KW-1003">Cell membrane</keyword>
<keyword id="KW-1015">Disulfide bond</keyword>
<keyword id="KW-0297">G-protein coupled receptor</keyword>
<keyword id="KW-0325">Glycoprotein</keyword>
<keyword id="KW-0449">Lipoprotein</keyword>
<keyword id="KW-0472">Membrane</keyword>
<keyword id="KW-0564">Palmitate</keyword>
<keyword id="KW-0675">Receptor</keyword>
<keyword id="KW-1185">Reference proteome</keyword>
<keyword id="KW-0807">Transducer</keyword>
<keyword id="KW-0812">Transmembrane</keyword>
<keyword id="KW-1133">Transmembrane helix</keyword>
<protein>
    <recommendedName>
        <fullName>Beta-3 adrenergic receptor</fullName>
    </recommendedName>
    <alternativeName>
        <fullName>Beta-3 adrenoreceptor</fullName>
        <shortName>Beta-3 adrenoceptor</shortName>
    </alternativeName>
</protein>
<dbReference type="EMBL" id="X72862">
    <property type="protein sequence ID" value="CAA51384.1"/>
    <property type="molecule type" value="Genomic_DNA"/>
</dbReference>
<dbReference type="EMBL" id="X60438">
    <property type="protein sequence ID" value="CAA42966.1"/>
    <property type="molecule type" value="Genomic_DNA"/>
</dbReference>
<dbReference type="EMBL" id="AF193027">
    <property type="protein sequence ID" value="AAF05768.1"/>
    <property type="molecule type" value="mRNA"/>
</dbReference>
<dbReference type="EMBL" id="BC132000">
    <property type="protein sequence ID" value="AAI32001.1"/>
    <property type="molecule type" value="mRNA"/>
</dbReference>
<dbReference type="EMBL" id="S53290">
    <property type="protein sequence ID" value="AAB24836.1"/>
    <property type="molecule type" value="mRNA"/>
</dbReference>
<dbReference type="CCDS" id="CCDS22213.1">
    <molecule id="P25962-1"/>
</dbReference>
<dbReference type="PIR" id="I77910">
    <property type="entry name" value="I77910"/>
</dbReference>
<dbReference type="PIR" id="S32804">
    <property type="entry name" value="S32804"/>
</dbReference>
<dbReference type="RefSeq" id="NP_001423115.1">
    <molecule id="P25962-1"/>
    <property type="nucleotide sequence ID" value="NM_001436186.1"/>
</dbReference>
<dbReference type="RefSeq" id="NP_038490.2">
    <molecule id="P25962-1"/>
    <property type="nucleotide sequence ID" value="NM_013462.4"/>
</dbReference>
<dbReference type="RefSeq" id="XP_006509050.1">
    <property type="nucleotide sequence ID" value="XM_006508987.3"/>
</dbReference>
<dbReference type="RefSeq" id="XP_006509051.1">
    <property type="nucleotide sequence ID" value="XM_006508988.3"/>
</dbReference>
<dbReference type="RefSeq" id="XP_011240418.1">
    <property type="nucleotide sequence ID" value="XM_011242116.2"/>
</dbReference>
<dbReference type="RefSeq" id="XP_011240419.1">
    <property type="nucleotide sequence ID" value="XM_011242117.2"/>
</dbReference>
<dbReference type="RefSeq" id="XP_017168014.1">
    <property type="nucleotide sequence ID" value="XM_017312525.1"/>
</dbReference>
<dbReference type="RefSeq" id="XP_030099106.1">
    <molecule id="P25962-1"/>
    <property type="nucleotide sequence ID" value="XM_030243246.2"/>
</dbReference>
<dbReference type="RefSeq" id="XP_030099107.1">
    <molecule id="P25962-1"/>
    <property type="nucleotide sequence ID" value="XM_030243247.2"/>
</dbReference>
<dbReference type="SMR" id="P25962"/>
<dbReference type="BioGRID" id="198008">
    <property type="interactions" value="1"/>
</dbReference>
<dbReference type="CORUM" id="P25962"/>
<dbReference type="FunCoup" id="P25962">
    <property type="interactions" value="687"/>
</dbReference>
<dbReference type="IntAct" id="P25962">
    <property type="interactions" value="1"/>
</dbReference>
<dbReference type="MINT" id="P25962"/>
<dbReference type="STRING" id="10090.ENSMUSP00000080162"/>
<dbReference type="BindingDB" id="P25962"/>
<dbReference type="ChEMBL" id="CHEMBL4030"/>
<dbReference type="DrugCentral" id="P25962"/>
<dbReference type="GuidetoPHARMACOLOGY" id="30"/>
<dbReference type="GlyCosmos" id="P25962">
    <property type="glycosylation" value="2 sites, No reported glycans"/>
</dbReference>
<dbReference type="GlyGen" id="P25962">
    <property type="glycosylation" value="3 sites"/>
</dbReference>
<dbReference type="iPTMnet" id="P25962"/>
<dbReference type="PhosphoSitePlus" id="P25962"/>
<dbReference type="SwissPalm" id="P25962"/>
<dbReference type="jPOST" id="P25962"/>
<dbReference type="PaxDb" id="10090-ENSMUSP00000080162"/>
<dbReference type="PeptideAtlas" id="P25962"/>
<dbReference type="ProteomicsDB" id="296187">
    <molecule id="P25962-1"/>
</dbReference>
<dbReference type="ProteomicsDB" id="296188">
    <molecule id="P25962-2"/>
</dbReference>
<dbReference type="DNASU" id="11556"/>
<dbReference type="Ensembl" id="ENSMUST00000081438.10">
    <molecule id="P25962-1"/>
    <property type="protein sequence ID" value="ENSMUSP00000080162.4"/>
    <property type="gene ID" value="ENSMUSG00000031489.16"/>
</dbReference>
<dbReference type="Ensembl" id="ENSMUST00000117565.2">
    <molecule id="P25962-2"/>
    <property type="protein sequence ID" value="ENSMUSP00000113732.2"/>
    <property type="gene ID" value="ENSMUSG00000031489.16"/>
</dbReference>
<dbReference type="Ensembl" id="ENSMUST00000121838.2">
    <molecule id="P25962-1"/>
    <property type="protein sequence ID" value="ENSMUSP00000113006.2"/>
    <property type="gene ID" value="ENSMUSG00000031489.16"/>
</dbReference>
<dbReference type="GeneID" id="11556"/>
<dbReference type="KEGG" id="mmu:11556"/>
<dbReference type="UCSC" id="uc009lie.1">
    <molecule id="P25962-1"/>
    <property type="organism name" value="mouse"/>
</dbReference>
<dbReference type="UCSC" id="uc009lig.1">
    <molecule id="P25962-2"/>
    <property type="organism name" value="mouse"/>
</dbReference>
<dbReference type="AGR" id="MGI:87939"/>
<dbReference type="CTD" id="155"/>
<dbReference type="MGI" id="MGI:87939">
    <property type="gene designation" value="Adrb3"/>
</dbReference>
<dbReference type="VEuPathDB" id="HostDB:ENSMUSG00000031489"/>
<dbReference type="eggNOG" id="KOG3656">
    <property type="taxonomic scope" value="Eukaryota"/>
</dbReference>
<dbReference type="GeneTree" id="ENSGT00940000158663"/>
<dbReference type="HOGENOM" id="CLU_009579_11_0_1"/>
<dbReference type="InParanoid" id="P25962"/>
<dbReference type="OMA" id="CAFASNI"/>
<dbReference type="OrthoDB" id="5983033at2759"/>
<dbReference type="PhylomeDB" id="P25962"/>
<dbReference type="TreeFam" id="TF316350"/>
<dbReference type="Reactome" id="R-MMU-390696">
    <property type="pathway name" value="Adrenoceptors"/>
</dbReference>
<dbReference type="Reactome" id="R-MMU-418555">
    <property type="pathway name" value="G alpha (s) signalling events"/>
</dbReference>
<dbReference type="BioGRID-ORCS" id="11556">
    <property type="hits" value="1 hit in 78 CRISPR screens"/>
</dbReference>
<dbReference type="PRO" id="PR:P25962"/>
<dbReference type="Proteomes" id="UP000000589">
    <property type="component" value="Chromosome 8"/>
</dbReference>
<dbReference type="RNAct" id="P25962">
    <property type="molecule type" value="protein"/>
</dbReference>
<dbReference type="Bgee" id="ENSMUSG00000031489">
    <property type="expression patterns" value="Expressed in thoracic mammary gland and 95 other cell types or tissues"/>
</dbReference>
<dbReference type="ExpressionAtlas" id="P25962">
    <property type="expression patterns" value="baseline and differential"/>
</dbReference>
<dbReference type="GO" id="GO:0016020">
    <property type="term" value="C:membrane"/>
    <property type="evidence" value="ECO:0000314"/>
    <property type="project" value="MGI"/>
</dbReference>
<dbReference type="GO" id="GO:0005886">
    <property type="term" value="C:plasma membrane"/>
    <property type="evidence" value="ECO:0007669"/>
    <property type="project" value="UniProtKB-SubCell"/>
</dbReference>
<dbReference type="GO" id="GO:0043235">
    <property type="term" value="C:receptor complex"/>
    <property type="evidence" value="ECO:0000250"/>
    <property type="project" value="HGNC-UCL"/>
</dbReference>
<dbReference type="GO" id="GO:0031699">
    <property type="term" value="F:beta-3 adrenergic receptor binding"/>
    <property type="evidence" value="ECO:0000314"/>
    <property type="project" value="MGI"/>
</dbReference>
<dbReference type="GO" id="GO:0004939">
    <property type="term" value="F:beta-adrenergic receptor activity"/>
    <property type="evidence" value="ECO:0000250"/>
    <property type="project" value="HGNC-UCL"/>
</dbReference>
<dbReference type="GO" id="GO:0015052">
    <property type="term" value="F:beta3-adrenergic receptor activity"/>
    <property type="evidence" value="ECO:0000250"/>
    <property type="project" value="HGNC-UCL"/>
</dbReference>
<dbReference type="GO" id="GO:0051379">
    <property type="term" value="F:epinephrine binding"/>
    <property type="evidence" value="ECO:0007669"/>
    <property type="project" value="Ensembl"/>
</dbReference>
<dbReference type="GO" id="GO:0051380">
    <property type="term" value="F:norepinephrine binding"/>
    <property type="evidence" value="ECO:0007669"/>
    <property type="project" value="Ensembl"/>
</dbReference>
<dbReference type="GO" id="GO:0042803">
    <property type="term" value="F:protein homodimerization activity"/>
    <property type="evidence" value="ECO:0000250"/>
    <property type="project" value="HGNC-UCL"/>
</dbReference>
<dbReference type="GO" id="GO:0071880">
    <property type="term" value="P:adenylate cyclase-activating adrenergic receptor signaling pathway"/>
    <property type="evidence" value="ECO:0000250"/>
    <property type="project" value="HGNC-UCL"/>
</dbReference>
<dbReference type="GO" id="GO:0007189">
    <property type="term" value="P:adenylate cyclase-activating G protein-coupled receptor signaling pathway"/>
    <property type="evidence" value="ECO:0000314"/>
    <property type="project" value="MGI"/>
</dbReference>
<dbReference type="GO" id="GO:0050873">
    <property type="term" value="P:brown fat cell differentiation"/>
    <property type="evidence" value="ECO:0000316"/>
    <property type="project" value="MGI"/>
</dbReference>
<dbReference type="GO" id="GO:0002024">
    <property type="term" value="P:diet induced thermogenesis"/>
    <property type="evidence" value="ECO:0000316"/>
    <property type="project" value="MGI"/>
</dbReference>
<dbReference type="GO" id="GO:0042755">
    <property type="term" value="P:eating behavior"/>
    <property type="evidence" value="ECO:0007669"/>
    <property type="project" value="Ensembl"/>
</dbReference>
<dbReference type="GO" id="GO:0031649">
    <property type="term" value="P:heat generation"/>
    <property type="evidence" value="ECO:0000316"/>
    <property type="project" value="MGI"/>
</dbReference>
<dbReference type="GO" id="GO:0040015">
    <property type="term" value="P:negative regulation of multicellular organism growth"/>
    <property type="evidence" value="ECO:0000316"/>
    <property type="project" value="MGI"/>
</dbReference>
<dbReference type="GO" id="GO:0002025">
    <property type="term" value="P:norepinephrine-epinephrine-mediated vasodilation involved in regulation of systemic arterial blood pressure"/>
    <property type="evidence" value="ECO:0000314"/>
    <property type="project" value="MGI"/>
</dbReference>
<dbReference type="GO" id="GO:0120162">
    <property type="term" value="P:positive regulation of cold-induced thermogenesis"/>
    <property type="evidence" value="ECO:0000315"/>
    <property type="project" value="YuBioLab"/>
</dbReference>
<dbReference type="GO" id="GO:0043410">
    <property type="term" value="P:positive regulation of MAPK cascade"/>
    <property type="evidence" value="ECO:0000250"/>
    <property type="project" value="HGNC-UCL"/>
</dbReference>
<dbReference type="GO" id="GO:0009409">
    <property type="term" value="P:response to cold"/>
    <property type="evidence" value="ECO:0000316"/>
    <property type="project" value="MGI"/>
</dbReference>
<dbReference type="Gene3D" id="1.20.1070.10">
    <property type="entry name" value="Rhodopsin 7-helix transmembrane proteins"/>
    <property type="match status" value="1"/>
</dbReference>
<dbReference type="InterPro" id="IPR002233">
    <property type="entry name" value="ADR_fam"/>
</dbReference>
<dbReference type="InterPro" id="IPR000681">
    <property type="entry name" value="ADRB3_rcpt"/>
</dbReference>
<dbReference type="InterPro" id="IPR000276">
    <property type="entry name" value="GPCR_Rhodpsn"/>
</dbReference>
<dbReference type="InterPro" id="IPR017452">
    <property type="entry name" value="GPCR_Rhodpsn_7TM"/>
</dbReference>
<dbReference type="PANTHER" id="PTHR24248">
    <property type="entry name" value="ADRENERGIC RECEPTOR-RELATED G-PROTEIN COUPLED RECEPTOR"/>
    <property type="match status" value="1"/>
</dbReference>
<dbReference type="PANTHER" id="PTHR24248:SF3">
    <property type="entry name" value="BETA-3 ADRENERGIC RECEPTOR"/>
    <property type="match status" value="1"/>
</dbReference>
<dbReference type="Pfam" id="PF00001">
    <property type="entry name" value="7tm_1"/>
    <property type="match status" value="1"/>
</dbReference>
<dbReference type="PRINTS" id="PR01103">
    <property type="entry name" value="ADRENERGICR"/>
</dbReference>
<dbReference type="PRINTS" id="PR00563">
    <property type="entry name" value="ADRENRGCB3AR"/>
</dbReference>
<dbReference type="PRINTS" id="PR00237">
    <property type="entry name" value="GPCRRHODOPSN"/>
</dbReference>
<dbReference type="SMART" id="SM01381">
    <property type="entry name" value="7TM_GPCR_Srsx"/>
    <property type="match status" value="1"/>
</dbReference>
<dbReference type="SUPFAM" id="SSF81321">
    <property type="entry name" value="Family A G protein-coupled receptor-like"/>
    <property type="match status" value="1"/>
</dbReference>
<dbReference type="PROSITE" id="PS00237">
    <property type="entry name" value="G_PROTEIN_RECEP_F1_1"/>
    <property type="match status" value="1"/>
</dbReference>
<dbReference type="PROSITE" id="PS50262">
    <property type="entry name" value="G_PROTEIN_RECEP_F1_2"/>
    <property type="match status" value="1"/>
</dbReference>